<sequence>MAMFYAHALGGYDENLHAFPGISSTVANDVRKYSVVSVYNNKYDIVKDKYMWCYSQVNKRYIGALLPMFECNEYLQIGDPIHDQEGNQISIITYRHKNYYALSGIGYESLDLCLEGVGIHHHVLETGNAVYGKVQHDYSTIKEKAKEMSTLSPGPIIDYHVWIGDCICQVTAVDVHGKEIMRMRFKKGAVLPIPNLVKVKLGENDTENLSSTISAAPSR</sequence>
<keyword id="KW-0244">Early protein</keyword>
<keyword id="KW-0378">Hydrolase</keyword>
<keyword id="KW-0540">Nuclease</keyword>
<accession>Q6J362</accession>
<accession>A9J129</accession>
<name>POXIN_VACCA</name>
<comment type="function">
    <text evidence="2">Nuclease that is responsible for viral evasion of host cGAS-STING innate immunity. Cleaves 2',3'-cGAMP which is produced by host cGAS following recognition of cytosolic DNA and blocks the subsequent 2',3'-cGAMP-mediated activation of TMEM173/STING, which normally spreads to adjacent cells and activates the interferon and NF-kappa-B immune responses.</text>
</comment>
<comment type="catalytic activity">
    <reaction evidence="2">
        <text>2',3'-cGAMP + H2O = Gp(2'-5')Ap(3') + H(+)</text>
        <dbReference type="Rhea" id="RHEA:59472"/>
        <dbReference type="ChEBI" id="CHEBI:15377"/>
        <dbReference type="ChEBI" id="CHEBI:15378"/>
        <dbReference type="ChEBI" id="CHEBI:143093"/>
        <dbReference type="ChEBI" id="CHEBI:143098"/>
    </reaction>
    <physiologicalReaction direction="left-to-right" evidence="2">
        <dbReference type="Rhea" id="RHEA:59473"/>
    </physiologicalReaction>
</comment>
<comment type="subunit">
    <text evidence="2">Homodimer.</text>
</comment>
<comment type="induction">
    <text>Expressed in the early phase of the viral replicative cycle.</text>
</comment>
<comment type="domain">
    <text evidence="2">The substrate binding site is formed by the N-terminus of a monomer and the C-terminus of the opposite monomer.</text>
</comment>
<comment type="miscellaneous">
    <text evidence="3">The sequence shown comes from the strain chorioallantois vaccinia virus Ankara (CVA), which is the ancestor strain of the modified vaccinia virus Ankara (MVA).</text>
</comment>
<comment type="similarity">
    <text evidence="2">Belongs to the poxin family.</text>
</comment>
<comment type="caution">
    <text evidence="5">The truncated poxin of the Modified Virus Ankara (MVA) is probably non-functional, since part of its active site is missing.</text>
</comment>
<proteinExistence type="evidence at transcript level"/>
<evidence type="ECO:0000250" key="1">
    <source>
        <dbReference type="UniProtKB" id="Q01225"/>
    </source>
</evidence>
<evidence type="ECO:0000255" key="2">
    <source>
        <dbReference type="HAMAP-Rule" id="MF_04143"/>
    </source>
</evidence>
<evidence type="ECO:0000269" key="3">
    <source>
    </source>
</evidence>
<evidence type="ECO:0000303" key="4">
    <source>
    </source>
</evidence>
<evidence type="ECO:0000305" key="5">
    <source>
    </source>
</evidence>
<evidence type="ECO:0000312" key="6">
    <source>
        <dbReference type="EMBL" id="AAT10566.1"/>
    </source>
</evidence>
<evidence type="ECO:0000312" key="7">
    <source>
        <dbReference type="EMBL" id="CAM58358.1"/>
    </source>
</evidence>
<evidence type="ECO:0000312" key="8">
    <source>
        <dbReference type="Proteomes" id="UP000136916"/>
    </source>
</evidence>
<protein>
    <recommendedName>
        <fullName evidence="2 4">Poxin</fullName>
        <ecNumber evidence="2">3.1.-.-</ecNumber>
    </recommendedName>
    <alternativeName>
        <fullName evidence="1">Immune nuclease</fullName>
    </alternativeName>
    <alternativeName>
        <fullName evidence="7">Protein CVA194</fullName>
    </alternativeName>
</protein>
<reference key="1">
    <citation type="submission" date="2004-04" db="EMBL/GenBank/DDBJ databases">
        <authorList>
            <person name="Esposito J.J."/>
            <person name="Frace M."/>
            <person name="Sammons S.A."/>
            <person name="Olsen-Rasmussen M.S."/>
            <person name="Osborne J."/>
            <person name="Khristova M."/>
            <person name="Wohlhueter R.M."/>
        </authorList>
    </citation>
    <scope>NUCLEOTIDE SEQUENCE [LARGE SCALE GENOMIC DNA]</scope>
    <source>
        <strain evidence="6">Vaccine Acambis 3000 Modified Virus Ankara (MVA)</strain>
    </source>
</reference>
<reference evidence="7 8" key="2">
    <citation type="journal article" date="2007" name="J. Gen. Virol.">
        <title>Genomic sequence of chorioallantois vaccinia virus Ankara, the ancestor of modified vaccinia virus Ankara.</title>
        <authorList>
            <person name="Meisinger-Henschel C."/>
            <person name="Schmidt M."/>
            <person name="Lukassen S."/>
            <person name="Linke B."/>
            <person name="Krause L."/>
            <person name="Konietzny S."/>
            <person name="Goesmann A."/>
            <person name="Howley P."/>
            <person name="Chaplin P."/>
            <person name="Suter M."/>
            <person name="Hausmann J."/>
        </authorList>
    </citation>
    <scope>NUCLEOTIDE SEQUENCE [LARGE SCALE GENOMIC DNA]</scope>
    <source>
        <strain evidence="7">Chorioallantois vaccinia virus Ankara</strain>
    </source>
</reference>
<reference key="3">
    <citation type="journal article" date="2019" name="Nature">
        <title>Viral and metazoan poxins are cGAMP-specific nucleases that restrict cGAS-STING signalling.</title>
        <authorList>
            <person name="Eaglesham J.B."/>
            <person name="Pan Y."/>
            <person name="Kupper T.S."/>
            <person name="Kranzusch P.J."/>
        </authorList>
    </citation>
    <scope>CAUTION</scope>
</reference>
<organismHost>
    <name type="scientific">Homo sapiens</name>
    <name type="common">Human</name>
    <dbReference type="NCBI Taxonomy" id="9606"/>
</organismHost>
<dbReference type="EC" id="3.1.-.-" evidence="2"/>
<dbReference type="EMBL" id="AY603355">
    <property type="protein sequence ID" value="AAT10566.1"/>
    <property type="molecule type" value="Genomic_DNA"/>
</dbReference>
<dbReference type="EMBL" id="AM501482">
    <property type="protein sequence ID" value="CAM58358.1"/>
    <property type="molecule type" value="Genomic_DNA"/>
</dbReference>
<dbReference type="SMR" id="Q6J362"/>
<dbReference type="Proteomes" id="UP000136916">
    <property type="component" value="Genome"/>
</dbReference>
<dbReference type="Proteomes" id="UP000172909">
    <property type="component" value="Segment"/>
</dbReference>
<dbReference type="GO" id="GO:0061507">
    <property type="term" value="F:2',3'-cyclic GMP-AMP binding"/>
    <property type="evidence" value="ECO:0007669"/>
    <property type="project" value="UniProtKB-UniRule"/>
</dbReference>
<dbReference type="GO" id="GO:0004518">
    <property type="term" value="F:nuclease activity"/>
    <property type="evidence" value="ECO:0007669"/>
    <property type="project" value="UniProtKB-UniRule"/>
</dbReference>
<dbReference type="GO" id="GO:0052170">
    <property type="term" value="P:symbiont-mediated suppression of host innate immune response"/>
    <property type="evidence" value="ECO:0007669"/>
    <property type="project" value="UniProtKB-UniRule"/>
</dbReference>
<dbReference type="HAMAP" id="MF_04143">
    <property type="entry name" value="Poxins"/>
    <property type="match status" value="1"/>
</dbReference>
<dbReference type="InterPro" id="IPR006853">
    <property type="entry name" value="Poxin_vir"/>
</dbReference>
<dbReference type="Pfam" id="PF04766">
    <property type="entry name" value="Baculo_p26"/>
    <property type="match status" value="1"/>
</dbReference>
<organism>
    <name type="scientific">Vaccinia virus (strain Ankara)</name>
    <name type="common">VACV</name>
    <dbReference type="NCBI Taxonomy" id="126794"/>
    <lineage>
        <taxon>Viruses</taxon>
        <taxon>Varidnaviria</taxon>
        <taxon>Bamfordvirae</taxon>
        <taxon>Nucleocytoviricota</taxon>
        <taxon>Pokkesviricetes</taxon>
        <taxon>Chitovirales</taxon>
        <taxon>Poxviridae</taxon>
        <taxon>Chordopoxvirinae</taxon>
        <taxon>Orthopoxvirus</taxon>
        <taxon>Vaccinia virus</taxon>
    </lineage>
</organism>
<gene>
    <name type="primary">OPG188</name>
    <name evidence="6" type="ORF">ACAM3000_MVA_168</name>
    <name evidence="7" type="ORF">CVA194</name>
</gene>
<feature type="chain" id="PRO_0000446975" description="Poxin">
    <location>
        <begin position="1"/>
        <end position="219"/>
    </location>
</feature>
<feature type="active site" description="Proton donor" evidence="2">
    <location>
        <position position="17"/>
    </location>
</feature>
<feature type="active site" description="Shared with catalytic histidine of dimeric partner" evidence="2">
    <location>
        <position position="138"/>
    </location>
</feature>
<feature type="active site" description="Proton acceptor; shared with catalytic histidine of dimeric partner" evidence="2">
    <location>
        <position position="142"/>
    </location>
</feature>
<feature type="site" description="Substrate binding" evidence="2">
    <location>
        <position position="60"/>
    </location>
</feature>
<feature type="site" description="Substrate binding" evidence="2">
    <location>
        <position position="105"/>
    </location>
</feature>
<feature type="site" description="Substrate binding" evidence="2">
    <location>
        <position position="169"/>
    </location>
</feature>
<feature type="site" description="Substrate binding" evidence="2">
    <location>
        <position position="182"/>
    </location>
</feature>
<feature type="site" description="Substrate binding" evidence="2">
    <location>
        <position position="184"/>
    </location>
</feature>
<feature type="site" description="Substrate binding" evidence="2">
    <location>
        <position position="186"/>
    </location>
</feature>
<feature type="sequence variant" description="In strain: Vaccine Acambis 3000 Modified Virus Ankara (ACAM3000)." evidence="3">
    <original>MAMFYAHALGGYDENLHAFPGISSTVANDVRKYSVVSVYNNKYDIVKDKYMWCYSQVNKRYIGALLPMFECNEYLQIGDPIHDQEGNQISI</original>
    <variation>MNIYKLEIRSMIKKE</variation>
    <location>
        <begin position="1"/>
        <end position="91"/>
    </location>
</feature>
<feature type="sequence variant" description="In strain: Vaccine Acambis 3000 Modified Virus Ankara (ACAM3000)." evidence="3">
    <original>G</original>
    <variation>E</variation>
    <location>
        <position position="127"/>
    </location>
</feature>
<feature type="sequence variant" description="In strain: Vaccine Acambis 3000 Modified Virus Ankara (ACAM3000)." evidence="3">
    <original>STLSP</original>
    <variation>NALSS</variation>
    <location>
        <begin position="149"/>
        <end position="153"/>
    </location>
</feature>